<comment type="function">
    <text evidence="3">Odorant receptor.</text>
</comment>
<comment type="subcellular location">
    <subcellularLocation>
        <location>Cell membrane</location>
        <topology>Multi-pass membrane protein</topology>
    </subcellularLocation>
</comment>
<comment type="similarity">
    <text evidence="2">Belongs to the G-protein coupled receptor 1 family.</text>
</comment>
<comment type="online information" name="Human Olfactory Receptor Data Exploratorium (HORDE)">
    <link uri="http://genome.weizmann.ac.il/horde/card/index/symbol:OR10AD1"/>
</comment>
<sequence length="317" mass="35698">MLRNGSIVTEFILVGFQQSSTSTRALLFALFLALYSLTMAMNGLIIFITSWTDPKLNSPMYFFLGHLSLLDVCFITTTIPQMLIHLVVRDHIVSFVCCMTQMYFVFCVGVAECILLAFMAYDRYVAICYPLNYVPIISQKVCVRLVGTAWFFGLINGIFLEYISFREPFRRDNHIESFFCEAPIVIGLSCGDPQFSLWAIFADAIVVILSPMVLTVTSYVHILATILSKASSSGRGKTFSTCASHLTVVIFLYTSAMFSYMNPHSTHGPDKDKPFSLLYTIITPMCNPIIYSFRNKEIKEAMVRALGRTRLAQPQSV</sequence>
<keyword id="KW-1003">Cell membrane</keyword>
<keyword id="KW-1015">Disulfide bond</keyword>
<keyword id="KW-0297">G-protein coupled receptor</keyword>
<keyword id="KW-0325">Glycoprotein</keyword>
<keyword id="KW-0472">Membrane</keyword>
<keyword id="KW-0552">Olfaction</keyword>
<keyword id="KW-0675">Receptor</keyword>
<keyword id="KW-1185">Reference proteome</keyword>
<keyword id="KW-0716">Sensory transduction</keyword>
<keyword id="KW-0807">Transducer</keyword>
<keyword id="KW-0812">Transmembrane</keyword>
<keyword id="KW-1133">Transmembrane helix</keyword>
<evidence type="ECO:0000255" key="1"/>
<evidence type="ECO:0000255" key="2">
    <source>
        <dbReference type="PROSITE-ProRule" id="PRU00521"/>
    </source>
</evidence>
<evidence type="ECO:0000305" key="3"/>
<reference key="1">
    <citation type="submission" date="2001-07" db="EMBL/GenBank/DDBJ databases">
        <title>Genome-wide discovery and analysis of human seven transmembrane helix receptor genes.</title>
        <authorList>
            <person name="Suwa M."/>
            <person name="Sato T."/>
            <person name="Okouchi I."/>
            <person name="Arita M."/>
            <person name="Futami K."/>
            <person name="Matsumoto S."/>
            <person name="Tsutsumi S."/>
            <person name="Aburatani H."/>
            <person name="Asai K."/>
            <person name="Akiyama Y."/>
        </authorList>
    </citation>
    <scope>NUCLEOTIDE SEQUENCE [GENOMIC DNA]</scope>
</reference>
<reference key="2">
    <citation type="journal article" date="2004" name="Genome Res.">
        <title>The status, quality, and expansion of the NIH full-length cDNA project: the Mammalian Gene Collection (MGC).</title>
        <authorList>
            <consortium name="The MGC Project Team"/>
        </authorList>
    </citation>
    <scope>NUCLEOTIDE SEQUENCE [LARGE SCALE MRNA]</scope>
    <source>
        <tissue>Brain</tissue>
        <tissue>Testis</tissue>
    </source>
</reference>
<reference key="3">
    <citation type="journal article" date="2004" name="Proc. Natl. Acad. Sci. U.S.A.">
        <title>The human olfactory receptor gene family.</title>
        <authorList>
            <person name="Malnic B."/>
            <person name="Godfrey P.A."/>
            <person name="Buck L.B."/>
        </authorList>
    </citation>
    <scope>IDENTIFICATION</scope>
</reference>
<reference key="4">
    <citation type="journal article" date="2004" name="Proc. Natl. Acad. Sci. U.S.A.">
        <authorList>
            <person name="Malnic B."/>
            <person name="Godfrey P.A."/>
            <person name="Buck L.B."/>
        </authorList>
    </citation>
    <scope>ERRATUM OF PUBMED:14983052</scope>
</reference>
<protein>
    <recommendedName>
        <fullName>Olfactory receptor 10AD1</fullName>
    </recommendedName>
    <alternativeName>
        <fullName>Olfactory receptor OR12-1</fullName>
    </alternativeName>
</protein>
<dbReference type="EMBL" id="AB065872">
    <property type="protein sequence ID" value="BAC06090.1"/>
    <property type="molecule type" value="Genomic_DNA"/>
</dbReference>
<dbReference type="EMBL" id="BC136757">
    <property type="protein sequence ID" value="AAI36758.1"/>
    <property type="molecule type" value="mRNA"/>
</dbReference>
<dbReference type="EMBL" id="BC136758">
    <property type="protein sequence ID" value="AAI36759.1"/>
    <property type="molecule type" value="mRNA"/>
</dbReference>
<dbReference type="EMBL" id="BK004354">
    <property type="protein sequence ID" value="DAA04752.1"/>
    <property type="molecule type" value="Genomic_DNA"/>
</dbReference>
<dbReference type="CCDS" id="CCDS31787.1"/>
<dbReference type="RefSeq" id="NP_001004134.1">
    <property type="nucleotide sequence ID" value="NM_001004134.1"/>
</dbReference>
<dbReference type="SMR" id="Q8NGE0"/>
<dbReference type="BioGRID" id="125719">
    <property type="interactions" value="1"/>
</dbReference>
<dbReference type="FunCoup" id="Q8NGE0">
    <property type="interactions" value="454"/>
</dbReference>
<dbReference type="STRING" id="9606.ENSP00000308689"/>
<dbReference type="GlyCosmos" id="Q8NGE0">
    <property type="glycosylation" value="1 site, No reported glycans"/>
</dbReference>
<dbReference type="GlyGen" id="Q8NGE0">
    <property type="glycosylation" value="1 site"/>
</dbReference>
<dbReference type="BioMuta" id="OR10AD1"/>
<dbReference type="DMDM" id="38258177"/>
<dbReference type="PaxDb" id="9606-ENSP00000308689"/>
<dbReference type="Antibodypedia" id="57040">
    <property type="antibodies" value="106 antibodies from 23 providers"/>
</dbReference>
<dbReference type="DNASU" id="121275"/>
<dbReference type="Ensembl" id="ENST00000310248.4">
    <property type="protein sequence ID" value="ENSP00000308689.2"/>
    <property type="gene ID" value="ENSG00000172640.4"/>
</dbReference>
<dbReference type="GeneID" id="121275"/>
<dbReference type="KEGG" id="hsa:121275"/>
<dbReference type="MANE-Select" id="ENST00000310248.4">
    <property type="protein sequence ID" value="ENSP00000308689.2"/>
    <property type="RefSeq nucleotide sequence ID" value="NM_001004134.1"/>
    <property type="RefSeq protein sequence ID" value="NP_001004134.1"/>
</dbReference>
<dbReference type="UCSC" id="uc001rrl.2">
    <property type="organism name" value="human"/>
</dbReference>
<dbReference type="AGR" id="HGNC:14819"/>
<dbReference type="CTD" id="121275"/>
<dbReference type="DisGeNET" id="121275"/>
<dbReference type="GeneCards" id="OR10AD1"/>
<dbReference type="HGNC" id="HGNC:14819">
    <property type="gene designation" value="OR10AD1"/>
</dbReference>
<dbReference type="HPA" id="ENSG00000172640">
    <property type="expression patterns" value="Tissue enhanced (retina)"/>
</dbReference>
<dbReference type="neXtProt" id="NX_Q8NGE0"/>
<dbReference type="PharmGKB" id="PA31959"/>
<dbReference type="VEuPathDB" id="HostDB:ENSG00000172640"/>
<dbReference type="eggNOG" id="ENOG502QVH7">
    <property type="taxonomic scope" value="Eukaryota"/>
</dbReference>
<dbReference type="GeneTree" id="ENSGT01130000278310"/>
<dbReference type="HOGENOM" id="CLU_012526_1_0_1"/>
<dbReference type="InParanoid" id="Q8NGE0"/>
<dbReference type="OMA" id="QMYFVFC"/>
<dbReference type="OrthoDB" id="9824046at2759"/>
<dbReference type="PAN-GO" id="Q8NGE0">
    <property type="GO annotations" value="0 GO annotations based on evolutionary models"/>
</dbReference>
<dbReference type="PhylomeDB" id="Q8NGE0"/>
<dbReference type="TreeFam" id="TF338235"/>
<dbReference type="PathwayCommons" id="Q8NGE0"/>
<dbReference type="Reactome" id="R-HSA-9752946">
    <property type="pathway name" value="Expression and translocation of olfactory receptors"/>
</dbReference>
<dbReference type="BioGRID-ORCS" id="121275">
    <property type="hits" value="14 hits in 746 CRISPR screens"/>
</dbReference>
<dbReference type="GeneWiki" id="OR10AD1"/>
<dbReference type="GenomeRNAi" id="121275"/>
<dbReference type="Pharos" id="Q8NGE0">
    <property type="development level" value="Tdark"/>
</dbReference>
<dbReference type="PRO" id="PR:Q8NGE0"/>
<dbReference type="Proteomes" id="UP000005640">
    <property type="component" value="Chromosome 12"/>
</dbReference>
<dbReference type="RNAct" id="Q8NGE0">
    <property type="molecule type" value="protein"/>
</dbReference>
<dbReference type="Bgee" id="ENSG00000172640">
    <property type="expression patterns" value="Expressed in sural nerve and 79 other cell types or tissues"/>
</dbReference>
<dbReference type="GO" id="GO:0005886">
    <property type="term" value="C:plasma membrane"/>
    <property type="evidence" value="ECO:0000318"/>
    <property type="project" value="GO_Central"/>
</dbReference>
<dbReference type="GO" id="GO:0004930">
    <property type="term" value="F:G protein-coupled receptor activity"/>
    <property type="evidence" value="ECO:0007669"/>
    <property type="project" value="UniProtKB-KW"/>
</dbReference>
<dbReference type="GO" id="GO:0004984">
    <property type="term" value="F:olfactory receptor activity"/>
    <property type="evidence" value="ECO:0000318"/>
    <property type="project" value="GO_Central"/>
</dbReference>
<dbReference type="GO" id="GO:0050911">
    <property type="term" value="P:detection of chemical stimulus involved in sensory perception of smell"/>
    <property type="evidence" value="ECO:0000318"/>
    <property type="project" value="GO_Central"/>
</dbReference>
<dbReference type="CDD" id="cd15237">
    <property type="entry name" value="7tmA_OR2-like"/>
    <property type="match status" value="1"/>
</dbReference>
<dbReference type="FunFam" id="1.10.1220.70:FF:000001">
    <property type="entry name" value="Olfactory receptor"/>
    <property type="match status" value="1"/>
</dbReference>
<dbReference type="FunFam" id="1.20.1070.10:FF:000015">
    <property type="entry name" value="Olfactory receptor"/>
    <property type="match status" value="1"/>
</dbReference>
<dbReference type="Gene3D" id="1.20.1070.10">
    <property type="entry name" value="Rhodopsin 7-helix transmembrane proteins"/>
    <property type="match status" value="1"/>
</dbReference>
<dbReference type="InterPro" id="IPR000276">
    <property type="entry name" value="GPCR_Rhodpsn"/>
</dbReference>
<dbReference type="InterPro" id="IPR017452">
    <property type="entry name" value="GPCR_Rhodpsn_7TM"/>
</dbReference>
<dbReference type="InterPro" id="IPR000725">
    <property type="entry name" value="Olfact_rcpt"/>
</dbReference>
<dbReference type="PANTHER" id="PTHR26453">
    <property type="entry name" value="OLFACTORY RECEPTOR"/>
    <property type="match status" value="1"/>
</dbReference>
<dbReference type="Pfam" id="PF13853">
    <property type="entry name" value="7tm_4"/>
    <property type="match status" value="1"/>
</dbReference>
<dbReference type="PRINTS" id="PR00237">
    <property type="entry name" value="GPCRRHODOPSN"/>
</dbReference>
<dbReference type="PRINTS" id="PR00245">
    <property type="entry name" value="OLFACTORYR"/>
</dbReference>
<dbReference type="SUPFAM" id="SSF81321">
    <property type="entry name" value="Family A G protein-coupled receptor-like"/>
    <property type="match status" value="1"/>
</dbReference>
<dbReference type="PROSITE" id="PS00237">
    <property type="entry name" value="G_PROTEIN_RECEP_F1_1"/>
    <property type="match status" value="1"/>
</dbReference>
<dbReference type="PROSITE" id="PS50262">
    <property type="entry name" value="G_PROTEIN_RECEP_F1_2"/>
    <property type="match status" value="1"/>
</dbReference>
<gene>
    <name type="primary">OR10AD1</name>
    <name type="synonym">OR10AD1P</name>
</gene>
<organism>
    <name type="scientific">Homo sapiens</name>
    <name type="common">Human</name>
    <dbReference type="NCBI Taxonomy" id="9606"/>
    <lineage>
        <taxon>Eukaryota</taxon>
        <taxon>Metazoa</taxon>
        <taxon>Chordata</taxon>
        <taxon>Craniata</taxon>
        <taxon>Vertebrata</taxon>
        <taxon>Euteleostomi</taxon>
        <taxon>Mammalia</taxon>
        <taxon>Eutheria</taxon>
        <taxon>Euarchontoglires</taxon>
        <taxon>Primates</taxon>
        <taxon>Haplorrhini</taxon>
        <taxon>Catarrhini</taxon>
        <taxon>Hominidae</taxon>
        <taxon>Homo</taxon>
    </lineage>
</organism>
<name>O10AD_HUMAN</name>
<accession>Q8NGE0</accession>
<accession>B9EGT9</accession>
<accession>Q6IFA8</accession>
<feature type="chain" id="PRO_0000150691" description="Olfactory receptor 10AD1">
    <location>
        <begin position="1"/>
        <end position="317"/>
    </location>
</feature>
<feature type="topological domain" description="Extracellular" evidence="1">
    <location>
        <begin position="1"/>
        <end position="25"/>
    </location>
</feature>
<feature type="transmembrane region" description="Helical; Name=1" evidence="1">
    <location>
        <begin position="26"/>
        <end position="46"/>
    </location>
</feature>
<feature type="topological domain" description="Cytoplasmic" evidence="1">
    <location>
        <begin position="47"/>
        <end position="55"/>
    </location>
</feature>
<feature type="transmembrane region" description="Helical; Name=2" evidence="1">
    <location>
        <begin position="56"/>
        <end position="76"/>
    </location>
</feature>
<feature type="topological domain" description="Extracellular" evidence="1">
    <location>
        <begin position="77"/>
        <end position="100"/>
    </location>
</feature>
<feature type="transmembrane region" description="Helical; Name=3" evidence="1">
    <location>
        <begin position="101"/>
        <end position="121"/>
    </location>
</feature>
<feature type="topological domain" description="Cytoplasmic" evidence="1">
    <location>
        <begin position="122"/>
        <end position="140"/>
    </location>
</feature>
<feature type="transmembrane region" description="Helical; Name=4" evidence="1">
    <location>
        <begin position="141"/>
        <end position="161"/>
    </location>
</feature>
<feature type="topological domain" description="Extracellular" evidence="1">
    <location>
        <begin position="162"/>
        <end position="198"/>
    </location>
</feature>
<feature type="transmembrane region" description="Helical; Name=5" evidence="1">
    <location>
        <begin position="199"/>
        <end position="218"/>
    </location>
</feature>
<feature type="topological domain" description="Cytoplasmic" evidence="1">
    <location>
        <begin position="219"/>
        <end position="238"/>
    </location>
</feature>
<feature type="transmembrane region" description="Helical; Name=6" evidence="1">
    <location>
        <begin position="239"/>
        <end position="259"/>
    </location>
</feature>
<feature type="topological domain" description="Extracellular" evidence="1">
    <location>
        <begin position="260"/>
        <end position="272"/>
    </location>
</feature>
<feature type="transmembrane region" description="Helical; Name=7" evidence="1">
    <location>
        <begin position="273"/>
        <end position="293"/>
    </location>
</feature>
<feature type="topological domain" description="Cytoplasmic" evidence="1">
    <location>
        <begin position="294"/>
        <end position="317"/>
    </location>
</feature>
<feature type="glycosylation site" description="N-linked (GlcNAc...) asparagine" evidence="1">
    <location>
        <position position="4"/>
    </location>
</feature>
<feature type="disulfide bond" evidence="2">
    <location>
        <begin position="98"/>
        <end position="190"/>
    </location>
</feature>
<feature type="sequence variant" id="VAR_053267" description="In dbSNP:rs17122812.">
    <original>V</original>
    <variation>A</variation>
    <location>
        <position position="8"/>
    </location>
</feature>
<feature type="sequence variant" id="VAR_053268" description="In dbSNP:rs17224674.">
    <original>R</original>
    <variation>Q</variation>
    <location>
        <position position="166"/>
    </location>
</feature>
<feature type="sequence variant" id="VAR_053269" description="In dbSNP:rs11830378.">
    <original>F</original>
    <variation>V</variation>
    <location>
        <position position="275"/>
    </location>
</feature>
<feature type="sequence variant" id="VAR_024125" description="In dbSNP:rs11168459.">
    <original>Y</original>
    <variation>H</variation>
    <location>
        <position position="279"/>
    </location>
</feature>
<proteinExistence type="evidence at transcript level"/>